<comment type="similarity">
    <text evidence="1">Belongs to the UPF0178 family.</text>
</comment>
<feature type="chain" id="PRO_0000241813" description="UPF0178 protein Gmet_1725">
    <location>
        <begin position="1"/>
        <end position="155"/>
    </location>
</feature>
<evidence type="ECO:0000255" key="1">
    <source>
        <dbReference type="HAMAP-Rule" id="MF_00489"/>
    </source>
</evidence>
<proteinExistence type="inferred from homology"/>
<dbReference type="EMBL" id="CP000148">
    <property type="protein sequence ID" value="ABB31956.1"/>
    <property type="molecule type" value="Genomic_DNA"/>
</dbReference>
<dbReference type="RefSeq" id="WP_004513378.1">
    <property type="nucleotide sequence ID" value="NC_007517.1"/>
</dbReference>
<dbReference type="STRING" id="269799.Gmet_1725"/>
<dbReference type="KEGG" id="gme:Gmet_1725"/>
<dbReference type="eggNOG" id="COG1671">
    <property type="taxonomic scope" value="Bacteria"/>
</dbReference>
<dbReference type="HOGENOM" id="CLU_106619_2_1_7"/>
<dbReference type="Proteomes" id="UP000007073">
    <property type="component" value="Chromosome"/>
</dbReference>
<dbReference type="CDD" id="cd18720">
    <property type="entry name" value="PIN_YqxD-like"/>
    <property type="match status" value="1"/>
</dbReference>
<dbReference type="HAMAP" id="MF_00489">
    <property type="entry name" value="UPF0178"/>
    <property type="match status" value="1"/>
</dbReference>
<dbReference type="InterPro" id="IPR003791">
    <property type="entry name" value="UPF0178"/>
</dbReference>
<dbReference type="NCBIfam" id="NF001095">
    <property type="entry name" value="PRK00124.1"/>
    <property type="match status" value="1"/>
</dbReference>
<dbReference type="PANTHER" id="PTHR35146">
    <property type="entry name" value="UPF0178 PROTEIN YAII"/>
    <property type="match status" value="1"/>
</dbReference>
<dbReference type="PANTHER" id="PTHR35146:SF1">
    <property type="entry name" value="UPF0178 PROTEIN YAII"/>
    <property type="match status" value="1"/>
</dbReference>
<dbReference type="Pfam" id="PF02639">
    <property type="entry name" value="DUF188"/>
    <property type="match status" value="1"/>
</dbReference>
<reference key="1">
    <citation type="journal article" date="2009" name="BMC Microbiol.">
        <title>The genome sequence of Geobacter metallireducens: features of metabolism, physiology and regulation common and dissimilar to Geobacter sulfurreducens.</title>
        <authorList>
            <person name="Aklujkar M."/>
            <person name="Krushkal J."/>
            <person name="DiBartolo G."/>
            <person name="Lapidus A."/>
            <person name="Land M.L."/>
            <person name="Lovley D.R."/>
        </authorList>
    </citation>
    <scope>NUCLEOTIDE SEQUENCE [LARGE SCALE GENOMIC DNA]</scope>
    <source>
        <strain>ATCC 53774 / DSM 7210 / GS-15</strain>
    </source>
</reference>
<organism>
    <name type="scientific">Geobacter metallireducens (strain ATCC 53774 / DSM 7210 / GS-15)</name>
    <dbReference type="NCBI Taxonomy" id="269799"/>
    <lineage>
        <taxon>Bacteria</taxon>
        <taxon>Pseudomonadati</taxon>
        <taxon>Thermodesulfobacteriota</taxon>
        <taxon>Desulfuromonadia</taxon>
        <taxon>Geobacterales</taxon>
        <taxon>Geobacteraceae</taxon>
        <taxon>Geobacter</taxon>
    </lineage>
</organism>
<protein>
    <recommendedName>
        <fullName evidence="1">UPF0178 protein Gmet_1725</fullName>
    </recommendedName>
</protein>
<sequence length="155" mass="17165">MKIWIDADACPRVIKEIVFRASERLRIPVCLVANKNLAKHATHLVESIVVGEGFDVADDYIADHAAPEDLVITADIPLAARIVAIGGVALDPRGELYTEENVGERLSMRDLMMELREGGLVQGGPSQFSLTDRQRFASSLDRLLTRLIREMRPVS</sequence>
<keyword id="KW-1185">Reference proteome</keyword>
<name>Y1725_GEOMG</name>
<gene>
    <name type="ordered locus">Gmet_1725</name>
</gene>
<accession>Q39UW8</accession>